<reference key="1">
    <citation type="journal article" date="2005" name="Nature">
        <title>The genome of the social amoeba Dictyostelium discoideum.</title>
        <authorList>
            <person name="Eichinger L."/>
            <person name="Pachebat J.A."/>
            <person name="Gloeckner G."/>
            <person name="Rajandream M.A."/>
            <person name="Sucgang R."/>
            <person name="Berriman M."/>
            <person name="Song J."/>
            <person name="Olsen R."/>
            <person name="Szafranski K."/>
            <person name="Xu Q."/>
            <person name="Tunggal B."/>
            <person name="Kummerfeld S."/>
            <person name="Madera M."/>
            <person name="Konfortov B.A."/>
            <person name="Rivero F."/>
            <person name="Bankier A.T."/>
            <person name="Lehmann R."/>
            <person name="Hamlin N."/>
            <person name="Davies R."/>
            <person name="Gaudet P."/>
            <person name="Fey P."/>
            <person name="Pilcher K."/>
            <person name="Chen G."/>
            <person name="Saunders D."/>
            <person name="Sodergren E.J."/>
            <person name="Davis P."/>
            <person name="Kerhornou A."/>
            <person name="Nie X."/>
            <person name="Hall N."/>
            <person name="Anjard C."/>
            <person name="Hemphill L."/>
            <person name="Bason N."/>
            <person name="Farbrother P."/>
            <person name="Desany B."/>
            <person name="Just E."/>
            <person name="Morio T."/>
            <person name="Rost R."/>
            <person name="Churcher C.M."/>
            <person name="Cooper J."/>
            <person name="Haydock S."/>
            <person name="van Driessche N."/>
            <person name="Cronin A."/>
            <person name="Goodhead I."/>
            <person name="Muzny D.M."/>
            <person name="Mourier T."/>
            <person name="Pain A."/>
            <person name="Lu M."/>
            <person name="Harper D."/>
            <person name="Lindsay R."/>
            <person name="Hauser H."/>
            <person name="James K.D."/>
            <person name="Quiles M."/>
            <person name="Madan Babu M."/>
            <person name="Saito T."/>
            <person name="Buchrieser C."/>
            <person name="Wardroper A."/>
            <person name="Felder M."/>
            <person name="Thangavelu M."/>
            <person name="Johnson D."/>
            <person name="Knights A."/>
            <person name="Loulseged H."/>
            <person name="Mungall K.L."/>
            <person name="Oliver K."/>
            <person name="Price C."/>
            <person name="Quail M.A."/>
            <person name="Urushihara H."/>
            <person name="Hernandez J."/>
            <person name="Rabbinowitsch E."/>
            <person name="Steffen D."/>
            <person name="Sanders M."/>
            <person name="Ma J."/>
            <person name="Kohara Y."/>
            <person name="Sharp S."/>
            <person name="Simmonds M.N."/>
            <person name="Spiegler S."/>
            <person name="Tivey A."/>
            <person name="Sugano S."/>
            <person name="White B."/>
            <person name="Walker D."/>
            <person name="Woodward J.R."/>
            <person name="Winckler T."/>
            <person name="Tanaka Y."/>
            <person name="Shaulsky G."/>
            <person name="Schleicher M."/>
            <person name="Weinstock G.M."/>
            <person name="Rosenthal A."/>
            <person name="Cox E.C."/>
            <person name="Chisholm R.L."/>
            <person name="Gibbs R.A."/>
            <person name="Loomis W.F."/>
            <person name="Platzer M."/>
            <person name="Kay R.R."/>
            <person name="Williams J.G."/>
            <person name="Dear P.H."/>
            <person name="Noegel A.A."/>
            <person name="Barrell B.G."/>
            <person name="Kuspa A."/>
        </authorList>
    </citation>
    <scope>NUCLEOTIDE SEQUENCE [LARGE SCALE GENOMIC DNA]</scope>
    <source>
        <strain>AX4</strain>
    </source>
</reference>
<reference key="2">
    <citation type="journal article" date="2008" name="Biol. Direct">
        <title>cpRAS: a novel circularly permuted RAS-like GTPase domain with a highly scattered phylogenetic distribution.</title>
        <authorList>
            <person name="Elias M."/>
            <person name="Novotny M."/>
        </authorList>
    </citation>
    <scope>NOMENCLATURE</scope>
</reference>
<proteinExistence type="inferred from homology"/>
<protein>
    <recommendedName>
        <fullName>Circularly permutated Ras protein 2</fullName>
        <shortName>DdiCPRas2</shortName>
    </recommendedName>
</protein>
<feature type="chain" id="PRO_0000371348" description="Circularly permutated Ras protein 2">
    <location>
        <begin position="1"/>
        <end position="3933"/>
    </location>
</feature>
<feature type="region of interest" description="Disordered" evidence="3">
    <location>
        <begin position="23"/>
        <end position="101"/>
    </location>
</feature>
<feature type="region of interest" description="Disordered" evidence="3">
    <location>
        <begin position="136"/>
        <end position="189"/>
    </location>
</feature>
<feature type="region of interest" description="Disordered" evidence="3">
    <location>
        <begin position="1022"/>
        <end position="1054"/>
    </location>
</feature>
<feature type="region of interest" description="Disordered" evidence="3">
    <location>
        <begin position="2817"/>
        <end position="2839"/>
    </location>
</feature>
<feature type="region of interest" description="Disordered" evidence="3">
    <location>
        <begin position="3036"/>
        <end position="3086"/>
    </location>
</feature>
<feature type="region of interest" description="Disordered" evidence="3">
    <location>
        <begin position="3107"/>
        <end position="3142"/>
    </location>
</feature>
<feature type="region of interest" description="Disordered" evidence="3">
    <location>
        <begin position="3733"/>
        <end position="3754"/>
    </location>
</feature>
<feature type="coiled-coil region" evidence="2">
    <location>
        <begin position="12"/>
        <end position="46"/>
    </location>
</feature>
<feature type="coiled-coil region" evidence="2">
    <location>
        <begin position="167"/>
        <end position="215"/>
    </location>
</feature>
<feature type="compositionally biased region" description="Basic and acidic residues" evidence="3">
    <location>
        <begin position="28"/>
        <end position="62"/>
    </location>
</feature>
<feature type="compositionally biased region" description="Low complexity" evidence="3">
    <location>
        <begin position="70"/>
        <end position="92"/>
    </location>
</feature>
<feature type="compositionally biased region" description="Basic and acidic residues" evidence="3">
    <location>
        <begin position="136"/>
        <end position="145"/>
    </location>
</feature>
<feature type="compositionally biased region" description="Polar residues" evidence="3">
    <location>
        <begin position="146"/>
        <end position="156"/>
    </location>
</feature>
<feature type="compositionally biased region" description="Basic and acidic residues" evidence="3">
    <location>
        <begin position="168"/>
        <end position="189"/>
    </location>
</feature>
<feature type="compositionally biased region" description="Low complexity" evidence="3">
    <location>
        <begin position="2817"/>
        <end position="2826"/>
    </location>
</feature>
<feature type="compositionally biased region" description="Low complexity" evidence="3">
    <location>
        <begin position="3070"/>
        <end position="3086"/>
    </location>
</feature>
<feature type="compositionally biased region" description="Basic and acidic residues" evidence="3">
    <location>
        <begin position="3107"/>
        <end position="3120"/>
    </location>
</feature>
<feature type="compositionally biased region" description="Acidic residues" evidence="3">
    <location>
        <begin position="3121"/>
        <end position="3141"/>
    </location>
</feature>
<feature type="binding site" evidence="1">
    <location>
        <begin position="2853"/>
        <end position="2857"/>
    </location>
    <ligand>
        <name>GTP</name>
        <dbReference type="ChEBI" id="CHEBI:37565"/>
    </ligand>
</feature>
<feature type="binding site" evidence="1">
    <location>
        <begin position="2913"/>
        <end position="2916"/>
    </location>
    <ligand>
        <name>GTP</name>
        <dbReference type="ChEBI" id="CHEBI:37565"/>
    </ligand>
</feature>
<feature type="binding site" evidence="2">
    <location>
        <begin position="2976"/>
        <end position="2983"/>
    </location>
    <ligand>
        <name>GTP</name>
        <dbReference type="ChEBI" id="CHEBI:37565"/>
    </ligand>
</feature>
<gene>
    <name type="primary">cpras2</name>
    <name type="ORF">DDB_G0293376</name>
</gene>
<dbReference type="EMBL" id="AAFI02000204">
    <property type="protein sequence ID" value="EAL60755.1"/>
    <property type="molecule type" value="Genomic_DNA"/>
</dbReference>
<dbReference type="RefSeq" id="XP_629170.1">
    <property type="nucleotide sequence ID" value="XM_629168.1"/>
</dbReference>
<dbReference type="FunCoup" id="Q54BW4">
    <property type="interactions" value="2"/>
</dbReference>
<dbReference type="STRING" id="44689.Q54BW4"/>
<dbReference type="PaxDb" id="44689-DDB0231848"/>
<dbReference type="EnsemblProtists" id="EAL60755">
    <property type="protein sequence ID" value="EAL60755"/>
    <property type="gene ID" value="DDB_G0293376"/>
</dbReference>
<dbReference type="GeneID" id="8629191"/>
<dbReference type="KEGG" id="ddi:DDB_G0293376"/>
<dbReference type="dictyBase" id="DDB_G0293376">
    <property type="gene designation" value="cpras2"/>
</dbReference>
<dbReference type="VEuPathDB" id="AmoebaDB:DDB_G0293376"/>
<dbReference type="eggNOG" id="KOG0395">
    <property type="taxonomic scope" value="Eukaryota"/>
</dbReference>
<dbReference type="HOGENOM" id="CLU_224152_0_0_1"/>
<dbReference type="InParanoid" id="Q54BW4"/>
<dbReference type="OMA" id="TRYRIWG"/>
<dbReference type="PRO" id="PR:Q54BW4"/>
<dbReference type="Proteomes" id="UP000002195">
    <property type="component" value="Chromosome 6"/>
</dbReference>
<dbReference type="GO" id="GO:0012505">
    <property type="term" value="C:endomembrane system"/>
    <property type="evidence" value="ECO:0000318"/>
    <property type="project" value="GO_Central"/>
</dbReference>
<dbReference type="GO" id="GO:0004866">
    <property type="term" value="F:endopeptidase inhibitor activity"/>
    <property type="evidence" value="ECO:0007669"/>
    <property type="project" value="InterPro"/>
</dbReference>
<dbReference type="GO" id="GO:0005525">
    <property type="term" value="F:GTP binding"/>
    <property type="evidence" value="ECO:0007669"/>
    <property type="project" value="UniProtKB-KW"/>
</dbReference>
<dbReference type="GO" id="GO:0003924">
    <property type="term" value="F:GTPase activity"/>
    <property type="evidence" value="ECO:0000318"/>
    <property type="project" value="GO_Central"/>
</dbReference>
<dbReference type="GO" id="GO:0006897">
    <property type="term" value="P:endocytosis"/>
    <property type="evidence" value="ECO:0000318"/>
    <property type="project" value="GO_Central"/>
</dbReference>
<dbReference type="GO" id="GO:0006886">
    <property type="term" value="P:intracellular protein transport"/>
    <property type="evidence" value="ECO:0000318"/>
    <property type="project" value="GO_Central"/>
</dbReference>
<dbReference type="FunFam" id="3.40.50.300:FF:003775">
    <property type="entry name" value="Circularly permutated Ras protein 1"/>
    <property type="match status" value="1"/>
</dbReference>
<dbReference type="FunFam" id="3.40.50.300:FF:004048">
    <property type="entry name" value="Circularly permutated Ras protein 1"/>
    <property type="match status" value="1"/>
</dbReference>
<dbReference type="FunFam" id="1.50.10.20:FF:000085">
    <property type="entry name" value="Cpras2, large protein with the cpRAS domain"/>
    <property type="match status" value="1"/>
</dbReference>
<dbReference type="FunFam" id="2.60.40.1930:FF:000030">
    <property type="entry name" value="Cpras2, large protein with the cpRAS domain"/>
    <property type="match status" value="1"/>
</dbReference>
<dbReference type="Gene3D" id="1.50.10.20">
    <property type="match status" value="1"/>
</dbReference>
<dbReference type="Gene3D" id="2.60.40.1930">
    <property type="match status" value="1"/>
</dbReference>
<dbReference type="Gene3D" id="3.40.50.300">
    <property type="entry name" value="P-loop containing nucleotide triphosphate hydrolases"/>
    <property type="match status" value="2"/>
</dbReference>
<dbReference type="InterPro" id="IPR011625">
    <property type="entry name" value="A2M_N_BRD"/>
</dbReference>
<dbReference type="InterPro" id="IPR041246">
    <property type="entry name" value="Bact_MG10"/>
</dbReference>
<dbReference type="InterPro" id="IPR001599">
    <property type="entry name" value="Macroglobln_a2"/>
</dbReference>
<dbReference type="InterPro" id="IPR027417">
    <property type="entry name" value="P-loop_NTPase"/>
</dbReference>
<dbReference type="InterPro" id="IPR005225">
    <property type="entry name" value="Small_GTP-bd"/>
</dbReference>
<dbReference type="InterPro" id="IPR001806">
    <property type="entry name" value="Small_GTPase"/>
</dbReference>
<dbReference type="InterPro" id="IPR008930">
    <property type="entry name" value="Terpenoid_cyclase/PrenylTrfase"/>
</dbReference>
<dbReference type="InterPro" id="IPR051802">
    <property type="entry name" value="YfhM-like"/>
</dbReference>
<dbReference type="NCBIfam" id="TIGR00231">
    <property type="entry name" value="small_GTP"/>
    <property type="match status" value="1"/>
</dbReference>
<dbReference type="PANTHER" id="PTHR40094">
    <property type="entry name" value="ALPHA-2-MACROGLOBULIN HOMOLOG"/>
    <property type="match status" value="1"/>
</dbReference>
<dbReference type="PANTHER" id="PTHR40094:SF1">
    <property type="entry name" value="UBIQUITIN DOMAIN-CONTAINING PROTEIN"/>
    <property type="match status" value="1"/>
</dbReference>
<dbReference type="Pfam" id="PF00207">
    <property type="entry name" value="A2M"/>
    <property type="match status" value="1"/>
</dbReference>
<dbReference type="Pfam" id="PF07703">
    <property type="entry name" value="A2M_BRD"/>
    <property type="match status" value="1"/>
</dbReference>
<dbReference type="Pfam" id="PF17973">
    <property type="entry name" value="bMG10"/>
    <property type="match status" value="1"/>
</dbReference>
<dbReference type="Pfam" id="PF00071">
    <property type="entry name" value="Ras"/>
    <property type="match status" value="2"/>
</dbReference>
<dbReference type="PRINTS" id="PR00449">
    <property type="entry name" value="RASTRNSFRMNG"/>
</dbReference>
<dbReference type="SMART" id="SM01360">
    <property type="entry name" value="A2M"/>
    <property type="match status" value="1"/>
</dbReference>
<dbReference type="SMART" id="SM01359">
    <property type="entry name" value="A2M_N_2"/>
    <property type="match status" value="1"/>
</dbReference>
<dbReference type="SMART" id="SM00175">
    <property type="entry name" value="RAB"/>
    <property type="match status" value="1"/>
</dbReference>
<dbReference type="SMART" id="SM00173">
    <property type="entry name" value="RAS"/>
    <property type="match status" value="1"/>
</dbReference>
<dbReference type="SMART" id="SM00174">
    <property type="entry name" value="RHO"/>
    <property type="match status" value="1"/>
</dbReference>
<dbReference type="SUPFAM" id="SSF52540">
    <property type="entry name" value="P-loop containing nucleoside triphosphate hydrolases"/>
    <property type="match status" value="2"/>
</dbReference>
<dbReference type="SUPFAM" id="SSF48239">
    <property type="entry name" value="Terpenoid cyclases/Protein prenyltransferases"/>
    <property type="match status" value="1"/>
</dbReference>
<dbReference type="PROSITE" id="PS51421">
    <property type="entry name" value="RAS"/>
    <property type="match status" value="1"/>
</dbReference>
<organism>
    <name type="scientific">Dictyostelium discoideum</name>
    <name type="common">Social amoeba</name>
    <dbReference type="NCBI Taxonomy" id="44689"/>
    <lineage>
        <taxon>Eukaryota</taxon>
        <taxon>Amoebozoa</taxon>
        <taxon>Evosea</taxon>
        <taxon>Eumycetozoa</taxon>
        <taxon>Dictyostelia</taxon>
        <taxon>Dictyosteliales</taxon>
        <taxon>Dictyosteliaceae</taxon>
        <taxon>Dictyostelium</taxon>
    </lineage>
</organism>
<comment type="domain">
    <text>In contrast to other GTP-binding proteins, it is characterized by a circular permutation of the GTPase motifs described by a G4-G3-G1 pattern.</text>
</comment>
<comment type="similarity">
    <text evidence="4">Belongs to the small GTPase superfamily. CpRas family.</text>
</comment>
<sequence>MSNSFDNFDFSVHEVKKQELESILLQQEQEKQAKEEKESIKDTDDKPIEDTEHSTNNDKPIEPVESVESTPTTTTTTKPTDEASSSSNNNNNKIDVTIEKKEGDITGIELEELLSKIPSTYQLSTINKTIQGFSTDIREPTDKPFENTSNIETTRQLKFPPPLVPPKTEAERLEQEQKQKQYDENRKETDRKLELELERLKNKKEEVEQIRAYFQPGDQKPIDYVIELTFNIFPSDIVDKETNKLLWCPEVSPRNPGFARDKPTNGWTFDQFQRTLTYTPIESWKKSTLYTITIPAEIKVSPTNIITTQGQQFEFTTETLKIELFMPASIREYSHNQTIFIGFNQKVSPQELLPFIQATNLRSAPAHVAKGTPNVLQFIHEEIMKQDPILKDLVTGYEGRNIGIKPTFGFNSSSTVIISVLQGAPSLEGTVKKLLTEQKDFRTLQSFKPNITTAPYSPHIDLVISFGNLNSLANPSEITWRPKVTPSFPDGDWVLSANSLVYKLSDNSNWPSSTSYTVFFENGPKSTSGEQMEEIELKFQTASINLTGAFGYDGINFESLNINSKSASTSNTFSNNVILIFRYNQIVNEESFKKIFSFKVDQLLSKAVEYQIISNAAEFHSITTFRKAIKENYLRFIDTQEPGSWFAIKPLKPLGDDLGYSIEFDGSLQSMEGPLPTKLDGGYNNYFFATYPQLTCTTDLVHDSFKVSFNQPIVNNSYDYNNYVLTPDAFISSRTDVQIELDYLPVGPSVLPLIQPPIEGTWSALTRNILSFKAASFDLIKPATTYTILPQPNSQFTTPWGKVFDKAIFGEVTTTLPNVNFRYPTLSSIKANQLFCLSFNQPVDPESVIANVRLQPDTFLSAKKFEVQLVTKISLEEFEDIDYSFKNAKLDGRLVFFRSVKPLPIGSIKFSVLPGVRSLEGPLISKDETYFGTLVVEKFSIIGTSPVDGAIIHSPYFFFINFNKPLKSKDALVYIDLTENHGPEETLTTIVDKITAIASVSASIASSDSSSSNQLIENQNNITTTTTTTTTNNNNNNNEVGESTTPNLPITTTTTNKNKEIDWDQFITIKPKPEKSTAKWTYEIIGKIYRLKIEDFSIWNASTNYQIIVDKSIESKYGETMEKDTVFDFYTPYNGIESVHPSPGFIVNTDKSDIFAIHFHQRINPVEILKVLKVEGVDSFNKKIKNIVLSNVDREQVPSEYLSQMSTSFSDPLNYIMFVRMSTVVPNSSLTLTVGPNIPSAEGPELNPNKLTYTFKISDHLHINSTTYYASDRTLQILFKQPLNLTGPALQKKIPLPESWIPTITPEISSEIQRTWTAQLNTSNTLQNGYSMICCKFETSLPFSTKFTFKLPDCIESETGEFYQQGIDSEDKYEFKTSTLQLVTSVPMNGHQTALLSRPVLICFNQKVDVVELLKYLTISQVSTSEKKKTKFTLEESSDFTHIEKSVGYEQDHWISLRTNPPLIPNSSYSITLKEGAPSLEGPLLTKEAINIFFTTNCTRVYASINSDQAHISFSEPLIHLPINGSSGGSSSSSLPSSEPIIPTITIKPDPGVPLTWKAGAGETIICNEKVSTWKQSTEYKFSFPEDLVSSKGYVMDQSTLDNLTIKTSVNSIIDKSGYPTLTDSIHFIRFSQNIDPKKQISKMKIFSKSGLFNSKTNHEVRLATKDEIDEKVIFSEHLDHNINYSRLKLFIGDVYDPADPTDLLIYKFVKPLPPNTQIQYEFEEFTSTQGQLTWVKPFYNYSIKSLPPLSIIDSESSFGKKTPFYFGDTLVIKFNNTLSTSTFQANMIRVEPDIPYSITLDDQSIFLKDFKYDQFQNTDIEFKIILNTNQIMDSTGQHIDISTIVGTGGIFNKNDSTLTYRLKVVPRNFQSTFKLPFLSSSSTNGIVTFDNSDLNSKPAICLRSKNINQYVIQLYKLNPYIDYPQFLDEEVDTKTLQKFTSLKSVPAVDQPILKSGELVHCRMVDIEIPSHEVDIEIDTYIDLFEGLTNKELMIGHIGVVLYPTQNALYPNVGKNTVTPLRRCWVQCTRLNIGAVTDQKILSCWSNSTVDGSVVPNVKISSLSTVNYTQFRMKEQKKSNNLIALQKHVGNLVDGVTNEHGLLHLPLQNNYSEIHIVAENPINKDVCLLPKVFVQPNSTFKAISWYVFDDQSLYRPKTTVQIKGYLRFLFRDQFEHKLSVYNFQSTLVIKYILEDGAGLTVLKGETKLNSFSAFNFSLDLPDTINLGKTTLKLSLADENDFHLLNEQNQKIRIKSDTGKTLRTSFIHSFDVQEFKRPEFVASASFLYNETNGFTGSSYIQVKSNYFEGASLPDCETSWKVSSCKANFVPPKMSKYQFGYVENDKLLKLVDHSIKREKTITGKTDDDGLHTVKTTFNGKAPNPPSSVYIDTSVDISDINQQTTTSTVRYILHPTHNFVGIKPSFNNDKPLIIHDGNKNTPLKLMMIVCDENGIPQPDIGISITISPISGYHQFDIPLINENHQSTIVSTDTEFQHSFILSEPNYKPKENILYNISATIYEKPDNKFTTTIPLLINWSLSEYKSNDLLDSSTIGKTTTTTTTTTTTTSNNNETKQPIKLEEFKFKEIKNVNISLDKKSYISGEKCLVSIDYFEMPYQCVLSIINNGVVFTKAYEITNGKDRVEFDIQEEWAPLCSVLCDVRNVGDHYLQGTTKLSITPTTKQLTITVKPEEEIVEPGADTNINVHVTDSTGANVANAEVCLLVIDESIIALSQHNVENPLNIFYPNSSSEHAKSMLSSYFHGLSSASVLLQPKLKQGTAIIAGTQQPIIKPDTYNHILEKKILINSNDNDNFNYSSYNNNNNNNNRYNTPVRNGNIGRPTRRGSGTDKVLLDILDTAGQEEYSAMRDQYYRHGDAFILAYSINSRSSFQNLQSYYNQLCRIKDCDSYACVIVIGTKADLEDQRQVSKEDGLLYARSLGAAFIETSAKTGFNVHTAFAIVSKLSAGYTGTAENKIVIVGDGGIGKSALTVRYVQSCFVEQYDPTIEDSYRKQVSLDDDPSLDGFIPDSLRADMEGNSTLQSASLMKKRSKKSSFGGFGGSGSSSSRKYKEKSPSSSSTRTSVSTSLSSRSETLGEVGLLDFGGSDKKLSRKSSLVEEESKRQYDDDDESKSESSEYDDDDDQDYEKDGLFETELSSLSMMRKDFNALANFTPSVFTNEVGKITIPIHLPDNLTRYRIWGVVCSKDEQKFGKGESLITSKVLVSTRCVPPRFLNINDSCTIGIVVSNNSNNNRMVKIGVKCSEHLTILNSNGTSTFGHFSFVEQKKRKIIYINVKTLNTGVGSIQISCVSGKYGDAMQVSIPIFNPPTTRTTSVYGVIDDGAGVIQPIEMPQDSLPIFGSLGLDISSTILQNIHDAFLSVYNYPFERTENLASAAIGIASLYHIIGEQKSSRNLPPSKIVKSKIGKLFLDLRNRQNENGDFSTWPSYAGHSNLSFQKNDFESVHAIQAIATLIEYGYEIESSKMKQLVKNSIDWLDRYILVNLQSKDQFILATVSYALFTLYCIHSKKNKSSVTQLAMKFYQTHTYSILSLESLAWILGTLQGNDSSVVKKRDEIITYLMRNSFEENNCLYFNSYYDKLIRSQLFHSLERTTAIIARSLIQSRYNIDVVSKVIIGLMDRKENGTWKNIQTNCWVITAVAEFSSTFERSSPKCLSRGWLVNTSDSSNLKTTFCGQTPYFDGKSTISYSIEVPLSILYSKSDLENVKFNNIIKSDKQQVIEPSSNVDENSEKVETQPSSSTTSIISIPKSELWLQKEGKGKLYYRMNIKYATVDLSTEEHFNGLTIHRQYSPKSKSDKMEFDSETGVLKVSVGSKVLVTLNVQTEVDRYNLALVDKFAGGFDIVDKTDFRLEGTVWEFQNQRDERCEVFTNQMERGKYTYKYTLRASTRGEYLIPSACIEEMYDPDVFGRTNSLRVIIN</sequence>
<evidence type="ECO:0000250" key="1"/>
<evidence type="ECO:0000255" key="2"/>
<evidence type="ECO:0000256" key="3">
    <source>
        <dbReference type="SAM" id="MobiDB-lite"/>
    </source>
</evidence>
<evidence type="ECO:0000305" key="4"/>
<keyword id="KW-0175">Coiled coil</keyword>
<keyword id="KW-0342">GTP-binding</keyword>
<keyword id="KW-0547">Nucleotide-binding</keyword>
<keyword id="KW-1185">Reference proteome</keyword>
<name>CPAS2_DICDI</name>
<accession>Q54BW4</accession>